<name>CYF_NOSP7</name>
<feature type="signal peptide" evidence="1">
    <location>
        <begin position="1"/>
        <end position="16"/>
    </location>
</feature>
<feature type="chain" id="PRO_1000130350" description="Cytochrome f">
    <location>
        <begin position="17"/>
        <end position="333"/>
    </location>
</feature>
<feature type="transmembrane region" description="Helical" evidence="1">
    <location>
        <begin position="17"/>
        <end position="36"/>
    </location>
</feature>
<feature type="transmembrane region" description="Helical" evidence="1">
    <location>
        <begin position="299"/>
        <end position="319"/>
    </location>
</feature>
<feature type="binding site" description="axial binding residue" evidence="1">
    <location>
        <position position="45"/>
    </location>
    <ligand>
        <name>heme</name>
        <dbReference type="ChEBI" id="CHEBI:30413"/>
    </ligand>
    <ligandPart>
        <name>Fe</name>
        <dbReference type="ChEBI" id="CHEBI:18248"/>
    </ligandPart>
</feature>
<feature type="binding site" description="covalent" evidence="1">
    <location>
        <position position="66"/>
    </location>
    <ligand>
        <name>heme</name>
        <dbReference type="ChEBI" id="CHEBI:30413"/>
    </ligand>
</feature>
<feature type="binding site" description="covalent" evidence="1">
    <location>
        <position position="69"/>
    </location>
    <ligand>
        <name>heme</name>
        <dbReference type="ChEBI" id="CHEBI:30413"/>
    </ligand>
</feature>
<feature type="binding site" description="axial binding residue" evidence="1">
    <location>
        <position position="70"/>
    </location>
    <ligand>
        <name>heme</name>
        <dbReference type="ChEBI" id="CHEBI:30413"/>
    </ligand>
    <ligandPart>
        <name>Fe</name>
        <dbReference type="ChEBI" id="CHEBI:18248"/>
    </ligandPart>
</feature>
<comment type="function">
    <text evidence="1">Component of the cytochrome b6-f complex, which mediates electron transfer between photosystem II (PSII) and photosystem I (PSI), cyclic electron flow around PSI, and state transitions.</text>
</comment>
<comment type="cofactor">
    <cofactor evidence="1">
        <name>heme</name>
        <dbReference type="ChEBI" id="CHEBI:30413"/>
    </cofactor>
    <text evidence="1">Binds 1 heme group covalently.</text>
</comment>
<comment type="subunit">
    <text evidence="1">The 4 large subunits of the cytochrome b6-f complex are cytochrome b6, subunit IV (17 kDa polypeptide, PetD), cytochrome f and the Rieske protein, while the 4 small subunits are PetG, PetL, PetM and PetN. The complex functions as a dimer.</text>
</comment>
<comment type="subcellular location">
    <subcellularLocation>
        <location evidence="1">Cellular thylakoid membrane</location>
        <topology evidence="1">Multi-pass membrane protein</topology>
    </subcellularLocation>
</comment>
<comment type="similarity">
    <text evidence="1">Belongs to the cytochrome f family.</text>
</comment>
<organism>
    <name type="scientific">Nostoc punctiforme (strain ATCC 29133 / PCC 73102)</name>
    <dbReference type="NCBI Taxonomy" id="63737"/>
    <lineage>
        <taxon>Bacteria</taxon>
        <taxon>Bacillati</taxon>
        <taxon>Cyanobacteriota</taxon>
        <taxon>Cyanophyceae</taxon>
        <taxon>Nostocales</taxon>
        <taxon>Nostocaceae</taxon>
        <taxon>Nostoc</taxon>
    </lineage>
</organism>
<gene>
    <name evidence="1" type="primary">petA</name>
    <name type="ordered locus">Npun_R0131</name>
</gene>
<sequence length="333" mass="36078">MRNVFRTARLTRSARAIVKTLLIAIATVTFYFTSDLALPQSAAAYPFWAQQTYPETPREPTGRIVCANCHLAAKVTEVEVPQSVLPDTVFKAIVKIPYDLSAQQVGADGSKVGLNVGAVLMLPEGFKIAPEDRISEELKEEIGDTAFQPYSEDKENVVIVGPLPGEQYQEIIFPVLSPNPATDKNIHFGKYSVHVGGNRGRGQVYPTGEKSNNSVYNASATGTITKIAKEEDADGNVKYLVNIQPESGDVVVDTVPLGPDLIVSEGQAVKTGDALTNNPNVGGFGQIDAEIVLQDSSRVKWMIAFVALVMLAQVMLVLKKKQVEKVQAAEMNF</sequence>
<proteinExistence type="inferred from homology"/>
<evidence type="ECO:0000255" key="1">
    <source>
        <dbReference type="HAMAP-Rule" id="MF_00610"/>
    </source>
</evidence>
<protein>
    <recommendedName>
        <fullName evidence="1">Cytochrome f</fullName>
    </recommendedName>
</protein>
<dbReference type="EMBL" id="CP001037">
    <property type="protein sequence ID" value="ACC78931.1"/>
    <property type="molecule type" value="Genomic_DNA"/>
</dbReference>
<dbReference type="RefSeq" id="WP_012406960.1">
    <property type="nucleotide sequence ID" value="NC_010628.1"/>
</dbReference>
<dbReference type="SMR" id="B2J3K1"/>
<dbReference type="STRING" id="63737.Npun_R0131"/>
<dbReference type="EnsemblBacteria" id="ACC78931">
    <property type="protein sequence ID" value="ACC78931"/>
    <property type="gene ID" value="Npun_R0131"/>
</dbReference>
<dbReference type="KEGG" id="npu:Npun_R0131"/>
<dbReference type="eggNOG" id="COG3258">
    <property type="taxonomic scope" value="Bacteria"/>
</dbReference>
<dbReference type="HOGENOM" id="CLU_033498_0_0_3"/>
<dbReference type="OrthoDB" id="581091at2"/>
<dbReference type="PhylomeDB" id="B2J3K1"/>
<dbReference type="Proteomes" id="UP000001191">
    <property type="component" value="Chromosome"/>
</dbReference>
<dbReference type="GO" id="GO:0031676">
    <property type="term" value="C:plasma membrane-derived thylakoid membrane"/>
    <property type="evidence" value="ECO:0007669"/>
    <property type="project" value="UniProtKB-SubCell"/>
</dbReference>
<dbReference type="GO" id="GO:0009055">
    <property type="term" value="F:electron transfer activity"/>
    <property type="evidence" value="ECO:0007669"/>
    <property type="project" value="UniProtKB-UniRule"/>
</dbReference>
<dbReference type="GO" id="GO:0020037">
    <property type="term" value="F:heme binding"/>
    <property type="evidence" value="ECO:0007669"/>
    <property type="project" value="InterPro"/>
</dbReference>
<dbReference type="GO" id="GO:0005506">
    <property type="term" value="F:iron ion binding"/>
    <property type="evidence" value="ECO:0007669"/>
    <property type="project" value="InterPro"/>
</dbReference>
<dbReference type="GO" id="GO:0015979">
    <property type="term" value="P:photosynthesis"/>
    <property type="evidence" value="ECO:0007669"/>
    <property type="project" value="UniProtKB-UniRule"/>
</dbReference>
<dbReference type="FunFam" id="1.20.5.700:FF:000001">
    <property type="entry name" value="Cytochrome f"/>
    <property type="match status" value="1"/>
</dbReference>
<dbReference type="FunFam" id="2.60.40.830:FF:000001">
    <property type="entry name" value="Cytochrome f"/>
    <property type="match status" value="1"/>
</dbReference>
<dbReference type="Gene3D" id="2.40.50.100">
    <property type="match status" value="1"/>
</dbReference>
<dbReference type="Gene3D" id="2.60.40.830">
    <property type="entry name" value="Cytochrome f large domain"/>
    <property type="match status" value="1"/>
</dbReference>
<dbReference type="Gene3D" id="1.20.5.700">
    <property type="entry name" value="Single helix bin"/>
    <property type="match status" value="1"/>
</dbReference>
<dbReference type="HAMAP" id="MF_00610">
    <property type="entry name" value="Cytb6_f_cytF"/>
    <property type="match status" value="1"/>
</dbReference>
<dbReference type="InterPro" id="IPR024058">
    <property type="entry name" value="Cyt-f_TM"/>
</dbReference>
<dbReference type="InterPro" id="IPR002325">
    <property type="entry name" value="Cyt_f"/>
</dbReference>
<dbReference type="InterPro" id="IPR024094">
    <property type="entry name" value="Cyt_f_lg_dom"/>
</dbReference>
<dbReference type="InterPro" id="IPR036826">
    <property type="entry name" value="Cyt_f_lg_dom_sf"/>
</dbReference>
<dbReference type="InterPro" id="IPR011054">
    <property type="entry name" value="Rudment_hybrid_motif"/>
</dbReference>
<dbReference type="NCBIfam" id="NF002736">
    <property type="entry name" value="PRK02693.1"/>
    <property type="match status" value="1"/>
</dbReference>
<dbReference type="PANTHER" id="PTHR33288">
    <property type="match status" value="1"/>
</dbReference>
<dbReference type="PANTHER" id="PTHR33288:SF10">
    <property type="entry name" value="CYTOCHROME F"/>
    <property type="match status" value="1"/>
</dbReference>
<dbReference type="Pfam" id="PF01333">
    <property type="entry name" value="Apocytochr_F_C"/>
    <property type="match status" value="1"/>
</dbReference>
<dbReference type="Pfam" id="PF16639">
    <property type="entry name" value="Apocytochr_F_N"/>
    <property type="match status" value="1"/>
</dbReference>
<dbReference type="PRINTS" id="PR00610">
    <property type="entry name" value="CYTOCHROMEF"/>
</dbReference>
<dbReference type="SUPFAM" id="SSF103431">
    <property type="entry name" value="Cytochrome f subunit of the cytochrome b6f complex, transmembrane anchor"/>
    <property type="match status" value="1"/>
</dbReference>
<dbReference type="SUPFAM" id="SSF49441">
    <property type="entry name" value="Cytochrome f, large domain"/>
    <property type="match status" value="1"/>
</dbReference>
<dbReference type="SUPFAM" id="SSF51246">
    <property type="entry name" value="Rudiment single hybrid motif"/>
    <property type="match status" value="1"/>
</dbReference>
<dbReference type="PROSITE" id="PS51010">
    <property type="entry name" value="CYTF"/>
    <property type="match status" value="1"/>
</dbReference>
<accession>B2J3K1</accession>
<keyword id="KW-0249">Electron transport</keyword>
<keyword id="KW-0349">Heme</keyword>
<keyword id="KW-0408">Iron</keyword>
<keyword id="KW-0472">Membrane</keyword>
<keyword id="KW-0479">Metal-binding</keyword>
<keyword id="KW-0602">Photosynthesis</keyword>
<keyword id="KW-1185">Reference proteome</keyword>
<keyword id="KW-0732">Signal</keyword>
<keyword id="KW-0793">Thylakoid</keyword>
<keyword id="KW-0812">Transmembrane</keyword>
<keyword id="KW-1133">Transmembrane helix</keyword>
<keyword id="KW-0813">Transport</keyword>
<reference key="1">
    <citation type="journal article" date="2013" name="Plant Physiol.">
        <title>A Nostoc punctiforme Sugar Transporter Necessary to Establish a Cyanobacterium-Plant Symbiosis.</title>
        <authorList>
            <person name="Ekman M."/>
            <person name="Picossi S."/>
            <person name="Campbell E.L."/>
            <person name="Meeks J.C."/>
            <person name="Flores E."/>
        </authorList>
    </citation>
    <scope>NUCLEOTIDE SEQUENCE [LARGE SCALE GENOMIC DNA]</scope>
    <source>
        <strain>ATCC 29133 / PCC 73102</strain>
    </source>
</reference>